<sequence length="129" mass="14562">MKYFVVALALVAAFACIAESKPAESEHELAEVEEENELADLEDAVWLEHLADLSDLEEARGFFGNTWKKIKGKADKIMLKKAVKIMVKKEGISKEEAQAKVDAMSKKQIRLYLLKYYGKKALQKASEKL</sequence>
<gene>
    <name type="primary">cit 1-1</name>
</gene>
<organism>
    <name type="scientific">Lachesana tarabaevi</name>
    <name type="common">Spider</name>
    <dbReference type="NCBI Taxonomy" id="379576"/>
    <lineage>
        <taxon>Eukaryota</taxon>
        <taxon>Metazoa</taxon>
        <taxon>Ecdysozoa</taxon>
        <taxon>Arthropoda</taxon>
        <taxon>Chelicerata</taxon>
        <taxon>Arachnida</taxon>
        <taxon>Araneae</taxon>
        <taxon>Araneomorphae</taxon>
        <taxon>Entelegynae</taxon>
        <taxon>Entelegynae incertae sedis</taxon>
        <taxon>Zodariidae</taxon>
        <taxon>Lachesana</taxon>
    </lineage>
</organism>
<keyword id="KW-0044">Antibiotic</keyword>
<keyword id="KW-0929">Antimicrobial</keyword>
<keyword id="KW-0204">Cytolysis</keyword>
<keyword id="KW-0903">Direct protein sequencing</keyword>
<keyword id="KW-0354">Hemolysis</keyword>
<keyword id="KW-0964">Secreted</keyword>
<keyword id="KW-0732">Signal</keyword>
<keyword id="KW-0800">Toxin</keyword>
<reference key="1">
    <citation type="journal article" date="2008" name="Biochem. J.">
        <title>Cyto-insectotoxins, a novel class of cytolytic and insecticidal peptides from spider venom.</title>
        <authorList>
            <person name="Vassilevski A.A."/>
            <person name="Kozlov S.A."/>
            <person name="Samsonova O.V."/>
            <person name="Egorova N.S."/>
            <person name="Karpunin D.V."/>
            <person name="Pluzhnikov K.A."/>
            <person name="Feofanov A.V."/>
            <person name="Grishin E.V."/>
        </authorList>
    </citation>
    <scope>NUCLEOTIDE SEQUENCE [MRNA]</scope>
    <scope>PROTEIN SEQUENCE OF 61-129</scope>
    <scope>FUNCTION</scope>
    <scope>SUBCELLULAR LOCATION</scope>
    <scope>TOXIC DOSE</scope>
    <source>
        <tissue>Venom</tissue>
        <tissue>Venom gland</tissue>
    </source>
</reference>
<reference key="2">
    <citation type="journal article" date="2016" name="Biochem. J.">
        <title>Lachesana tarabaevi, an expert in membrane-active toxins.</title>
        <authorList>
            <person name="Kuzmenkov A.I."/>
            <person name="Sachkova M.Y."/>
            <person name="Kovalchuk S.I."/>
            <person name="Grishin E.V."/>
            <person name="Vassilevski A.A."/>
        </authorList>
    </citation>
    <scope>FUNCTION</scope>
    <scope>SUBCELLULAR LOCATION</scope>
    <scope>DOMAIN</scope>
    <scope>PQM MOTIF</scope>
    <scope>MASS SPECTROMETRY</scope>
    <scope>TOXIC DOSE</scope>
    <source>
        <tissue>Venom</tissue>
    </source>
</reference>
<protein>
    <recommendedName>
        <fullName>M-zodatoxin-Lt8a</fullName>
        <shortName>M-ZDTX-Lt8a</shortName>
    </recommendedName>
    <alternativeName>
        <fullName evidence="4">Cytoinsectotoxin-1a</fullName>
        <shortName evidence="4">CIT-1a</shortName>
    </alternativeName>
</protein>
<evidence type="ECO:0000255" key="1"/>
<evidence type="ECO:0000269" key="2">
    <source>
    </source>
</evidence>
<evidence type="ECO:0000269" key="3">
    <source>
    </source>
</evidence>
<evidence type="ECO:0000303" key="4">
    <source>
    </source>
</evidence>
<evidence type="ECO:0000303" key="5">
    <source>
    </source>
</evidence>
<evidence type="ECO:0000305" key="6"/>
<evidence type="ECO:0000305" key="7">
    <source>
    </source>
</evidence>
<evidence type="ECO:0000305" key="8">
    <source>
    </source>
</evidence>
<feature type="signal peptide" evidence="1">
    <location>
        <begin position="1"/>
        <end position="20"/>
    </location>
</feature>
<feature type="propeptide" id="PRO_0000366074" evidence="2">
    <location>
        <begin position="21"/>
        <end position="60"/>
    </location>
</feature>
<feature type="chain" id="PRO_0000337158" description="M-zodatoxin-Lt8a">
    <location>
        <begin position="61"/>
        <end position="129"/>
    </location>
</feature>
<feature type="short sequence motif" description="Processing quadruplet motif" evidence="5">
    <location>
        <begin position="57"/>
        <end position="60"/>
    </location>
</feature>
<comment type="function">
    <text evidence="2 3">Insecticidal, cytolytic and antimicrobial peptide (PubMed:18215128, PubMed:27287558). Has insecticidal activity against the flesh fly S.carnaria, and against the cockroach N.cinerea (PubMed:18215128). Has insecticidal activity against D.melanogaster (PubMed:27287558). Has hemolytic activity against human erythrocytes (EC(50)=6 uM) (PubMed:18215128). Has cytolytic activity against insect Sf9 cells (EC(50)=1 uM) and human leukocytes (EC(50)=3 uM) (PubMed:18215128). Has antibacterial activity against the Gram-positive bacteria A.globiformis VKM Ac-1112 (MIC=0.5 uM), and B.subtilis VKM B-501 (MIC=0.6-0.9 uM), and against the Gram-negative bacteria E.coli C600 (MIC=0.5 uM), E.coli DH5alpha (MIC=0.9 uM), E.coli MH1 (MIC=0.5 uM), P.aeruginosa PAO1 (MIC=1.9 uM), and P.fluorescens VKM B-894 (MIC=3.8 uM) (PubMed:18215128, PubMed:27287558). Lacks antimicrobial activity against the Gram-positive bacteria M.luteus and S.aureus, and against the Gram-negative bacterium S.marcescens (PubMed:18215128). Forms voltage-dependent, ion-permeable channels in membranes (PubMed:18215128). At high concentration causes cell membrane lysis (PubMed:18215128).</text>
</comment>
<comment type="subcellular location">
    <subcellularLocation>
        <location evidence="2 3">Secreted</location>
    </subcellularLocation>
</comment>
<comment type="tissue specificity">
    <text evidence="7 8">Expressed by the venom gland.</text>
</comment>
<comment type="domain">
    <text evidence="3">Both the N-terminus (61-94) and the C-terminus (99-129) of the mature peptide form alpha-helices which probably disrupt target cell membranes. The linker region (95-98) probably derives from a processing quadruplet motif (PQM), found in propeptides of many zodatoxins, hinting at a fusion of two originally separate membrane-active peptides.</text>
</comment>
<comment type="PTM">
    <text evidence="5">Cleavage of the propeptide depends on the processing quadruplet motif (XXXR, with at least one of X being E).</text>
</comment>
<comment type="mass spectrometry" mass="7905.9" method="MALDI" evidence="3"/>
<comment type="toxic dose">
    <text evidence="2">LD(50) is 5 ug/g on adult flesh flies (S.carnaria) (PubMed:18215128).</text>
</comment>
<comment type="toxic dose">
    <text evidence="2">LD(50) is 20 ug/g on flesh fly larvae (S.carnaria) (PubMed:18215128).</text>
</comment>
<comment type="toxic dose">
    <text evidence="2">LD(50) is 500 ug/g on cockroachs (N.cinerea) (PubMed:18215128).</text>
</comment>
<comment type="toxic dose">
    <text evidence="3">LD(50) is 12.3 ug/g on D.melanogaster (PubMed:27287558).</text>
</comment>
<comment type="similarity">
    <text evidence="6">Belongs to the cationic peptide 06 (cytoinsectotoxin) family.</text>
</comment>
<proteinExistence type="evidence at protein level"/>
<accession>P85253</accession>
<accession>B3W6H9</accession>
<name>CTX11_LACTA</name>
<dbReference type="EMBL" id="FM165474">
    <property type="protein sequence ID" value="CAQ63550.1"/>
    <property type="molecule type" value="mRNA"/>
</dbReference>
<dbReference type="SMR" id="P85253"/>
<dbReference type="TCDB" id="1.C.138.1.1">
    <property type="family name" value="the m-zodatoxin-lt8a spider toxin (zst) family"/>
</dbReference>
<dbReference type="ArachnoServer" id="AS000615">
    <property type="toxin name" value="M-zodatoxin-Lt8a"/>
</dbReference>
<dbReference type="GO" id="GO:0005576">
    <property type="term" value="C:extracellular region"/>
    <property type="evidence" value="ECO:0000314"/>
    <property type="project" value="UniProtKB"/>
</dbReference>
<dbReference type="GO" id="GO:0090729">
    <property type="term" value="F:toxin activity"/>
    <property type="evidence" value="ECO:0007669"/>
    <property type="project" value="UniProtKB-KW"/>
</dbReference>
<dbReference type="GO" id="GO:0051838">
    <property type="term" value="P:cytolysis by host of symbiont cells"/>
    <property type="evidence" value="ECO:0000314"/>
    <property type="project" value="UniProtKB"/>
</dbReference>
<dbReference type="GO" id="GO:0050829">
    <property type="term" value="P:defense response to Gram-negative bacterium"/>
    <property type="evidence" value="ECO:0000314"/>
    <property type="project" value="UniProtKB"/>
</dbReference>
<dbReference type="GO" id="GO:0050830">
    <property type="term" value="P:defense response to Gram-positive bacterium"/>
    <property type="evidence" value="ECO:0000314"/>
    <property type="project" value="UniProtKB"/>
</dbReference>
<dbReference type="InterPro" id="IPR018802">
    <property type="entry name" value="Latarcin_precursor"/>
</dbReference>
<dbReference type="Pfam" id="PF10279">
    <property type="entry name" value="Latarcin"/>
    <property type="match status" value="1"/>
</dbReference>